<accession>P83308</accession>
<comment type="function">
    <text evidence="2">May function as a neurotransmitter or modulator.</text>
</comment>
<comment type="subcellular location">
    <subcellularLocation>
        <location>Secreted</location>
    </subcellularLocation>
</comment>
<comment type="similarity">
    <text evidence="2">Belongs to the FARP (FMRFamide related peptide) family.</text>
</comment>
<organism evidence="3">
    <name type="scientific">Gallus gallus</name>
    <name type="common">Chicken</name>
    <dbReference type="NCBI Taxonomy" id="9031"/>
    <lineage>
        <taxon>Eukaryota</taxon>
        <taxon>Metazoa</taxon>
        <taxon>Chordata</taxon>
        <taxon>Craniata</taxon>
        <taxon>Vertebrata</taxon>
        <taxon>Euteleostomi</taxon>
        <taxon>Archelosauria</taxon>
        <taxon>Archosauria</taxon>
        <taxon>Dinosauria</taxon>
        <taxon>Saurischia</taxon>
        <taxon>Theropoda</taxon>
        <taxon>Coelurosauria</taxon>
        <taxon>Aves</taxon>
        <taxon>Neognathae</taxon>
        <taxon>Galloanserae</taxon>
        <taxon>Galliformes</taxon>
        <taxon>Phasianidae</taxon>
        <taxon>Phasianinae</taxon>
        <taxon>Gallus</taxon>
    </lineage>
</organism>
<feature type="peptide" id="PRO_0000043653" description="FMRFamide-like neuropeptide">
    <location>
        <begin position="1"/>
        <end position="5"/>
    </location>
</feature>
<feature type="modified residue" description="Phenylalanine amide" evidence="1">
    <location>
        <position position="5"/>
    </location>
</feature>
<keyword id="KW-0027">Amidation</keyword>
<keyword id="KW-0903">Direct protein sequencing</keyword>
<keyword id="KW-0527">Neuropeptide</keyword>
<keyword id="KW-1185">Reference proteome</keyword>
<keyword id="KW-0964">Secreted</keyword>
<reference evidence="3" key="1">
    <citation type="journal article" date="1983" name="Nature">
        <title>A novel active pentapeptide from chicken brain identified by antibodies to FMRFamide.</title>
        <authorList>
            <person name="Dockray G.J."/>
            <person name="Reeve J.R. Jr."/>
            <person name="Shively J."/>
            <person name="Gayton R.J."/>
            <person name="Barnard C.S."/>
        </authorList>
    </citation>
    <scope>PROTEIN SEQUENCE</scope>
    <scope>AMIDATION AT PHE-5</scope>
    <scope>SYNTHESIS</scope>
    <source>
        <tissue evidence="1">Brain</tissue>
    </source>
</reference>
<sequence>LPLRF</sequence>
<name>FARP_CHICK</name>
<dbReference type="InParanoid" id="P83308"/>
<dbReference type="Proteomes" id="UP000000539">
    <property type="component" value="Unassembled WGS sequence"/>
</dbReference>
<dbReference type="GO" id="GO:0005576">
    <property type="term" value="C:extracellular region"/>
    <property type="evidence" value="ECO:0007669"/>
    <property type="project" value="UniProtKB-SubCell"/>
</dbReference>
<dbReference type="GO" id="GO:0007218">
    <property type="term" value="P:neuropeptide signaling pathway"/>
    <property type="evidence" value="ECO:0000304"/>
    <property type="project" value="UniProtKB"/>
</dbReference>
<protein>
    <recommendedName>
        <fullName>FMRFamide-like neuropeptide</fullName>
    </recommendedName>
    <alternativeName>
        <fullName>LPLRF-amide</fullName>
    </alternativeName>
</protein>
<evidence type="ECO:0000269" key="1">
    <source>
    </source>
</evidence>
<evidence type="ECO:0000303" key="2">
    <source>
    </source>
</evidence>
<evidence type="ECO:0000305" key="3"/>
<proteinExistence type="evidence at protein level"/>